<reference key="1">
    <citation type="journal article" date="2006" name="J. Bacteriol.">
        <title>Living with genome instability: the adaptation of phytoplasmas to diverse environments of their insect and plant hosts.</title>
        <authorList>
            <person name="Bai X."/>
            <person name="Zhang J."/>
            <person name="Ewing A."/>
            <person name="Miller S.A."/>
            <person name="Jancso Radek A."/>
            <person name="Shevchenko D.V."/>
            <person name="Tsukerman K."/>
            <person name="Walunas T."/>
            <person name="Lapidus A."/>
            <person name="Campbell J.W."/>
            <person name="Hogenhout S.A."/>
        </authorList>
    </citation>
    <scope>NUCLEOTIDE SEQUENCE [LARGE SCALE GENOMIC DNA]</scope>
    <source>
        <strain>AYWB</strain>
    </source>
</reference>
<name>PLSX_AYWBP</name>
<dbReference type="EC" id="2.3.1.274" evidence="1"/>
<dbReference type="EMBL" id="CP000061">
    <property type="protein sequence ID" value="ABC65259.1"/>
    <property type="molecule type" value="Genomic_DNA"/>
</dbReference>
<dbReference type="RefSeq" id="WP_011412425.1">
    <property type="nucleotide sequence ID" value="NC_007716.1"/>
</dbReference>
<dbReference type="SMR" id="Q2NJY4"/>
<dbReference type="STRING" id="322098.AYWB_142"/>
<dbReference type="KEGG" id="ayw:AYWB_142"/>
<dbReference type="eggNOG" id="COG0416">
    <property type="taxonomic scope" value="Bacteria"/>
</dbReference>
<dbReference type="HOGENOM" id="CLU_039379_1_1_14"/>
<dbReference type="OrthoDB" id="9806408at2"/>
<dbReference type="PhylomeDB" id="Q2NJY4"/>
<dbReference type="UniPathway" id="UPA00085"/>
<dbReference type="Proteomes" id="UP000001934">
    <property type="component" value="Chromosome"/>
</dbReference>
<dbReference type="GO" id="GO:0005737">
    <property type="term" value="C:cytoplasm"/>
    <property type="evidence" value="ECO:0007669"/>
    <property type="project" value="UniProtKB-SubCell"/>
</dbReference>
<dbReference type="GO" id="GO:0043811">
    <property type="term" value="F:phosphate:acyl-[acyl carrier protein] acyltransferase activity"/>
    <property type="evidence" value="ECO:0007669"/>
    <property type="project" value="UniProtKB-UniRule"/>
</dbReference>
<dbReference type="GO" id="GO:0006633">
    <property type="term" value="P:fatty acid biosynthetic process"/>
    <property type="evidence" value="ECO:0007669"/>
    <property type="project" value="UniProtKB-UniRule"/>
</dbReference>
<dbReference type="GO" id="GO:0008654">
    <property type="term" value="P:phospholipid biosynthetic process"/>
    <property type="evidence" value="ECO:0007669"/>
    <property type="project" value="UniProtKB-KW"/>
</dbReference>
<dbReference type="Gene3D" id="3.40.718.10">
    <property type="entry name" value="Isopropylmalate Dehydrogenase"/>
    <property type="match status" value="1"/>
</dbReference>
<dbReference type="HAMAP" id="MF_00019">
    <property type="entry name" value="PlsX"/>
    <property type="match status" value="1"/>
</dbReference>
<dbReference type="InterPro" id="IPR003664">
    <property type="entry name" value="FA_synthesis"/>
</dbReference>
<dbReference type="InterPro" id="IPR012281">
    <property type="entry name" value="Phospholipid_synth_PlsX-like"/>
</dbReference>
<dbReference type="NCBIfam" id="TIGR00182">
    <property type="entry name" value="plsX"/>
    <property type="match status" value="1"/>
</dbReference>
<dbReference type="PANTHER" id="PTHR30100">
    <property type="entry name" value="FATTY ACID/PHOSPHOLIPID SYNTHESIS PROTEIN PLSX"/>
    <property type="match status" value="1"/>
</dbReference>
<dbReference type="PANTHER" id="PTHR30100:SF1">
    <property type="entry name" value="PHOSPHATE ACYLTRANSFERASE"/>
    <property type="match status" value="1"/>
</dbReference>
<dbReference type="Pfam" id="PF02504">
    <property type="entry name" value="FA_synthesis"/>
    <property type="match status" value="1"/>
</dbReference>
<dbReference type="PIRSF" id="PIRSF002465">
    <property type="entry name" value="Phsphlp_syn_PlsX"/>
    <property type="match status" value="1"/>
</dbReference>
<dbReference type="SUPFAM" id="SSF53659">
    <property type="entry name" value="Isocitrate/Isopropylmalate dehydrogenase-like"/>
    <property type="match status" value="1"/>
</dbReference>
<sequence length="362" mass="39993">MIKIAIDAMGGDFAPLEIVKGTLLALNKNTELQVFLYGNQKLITPLIEKTPFFGNKQIIIKHTPYFLGSADKNIRDQLKTTPNTSLFLALEAAKQDEVQGVVSAGATQTLILASHLILKKMPLMKRIAIAPMFNSFDNRTRILLDAGANTELKPQHLHTFANYATIIAKEILAIPNPQIKLLNIGTEPTKGRALELETYQLLSQDSNLNFGGNEEPQNLLTTSADILLSDGFTANIALKTYEGTMLNFMNHLKNILTKNFIKKIATKTLFQKPLQQLKNQIDPRQIGGAMLLGLNKIVIKAHGSSQSYAFCQAILQTQKLIKAQVNQKIANALEIAKNKENQTKKISTSTINPKTSETTKES</sequence>
<accession>Q2NJY4</accession>
<comment type="function">
    <text evidence="1">Catalyzes the reversible formation of acyl-phosphate (acyl-PO(4)) from acyl-[acyl-carrier-protein] (acyl-ACP). This enzyme utilizes acyl-ACP as fatty acyl donor, but not acyl-CoA.</text>
</comment>
<comment type="catalytic activity">
    <reaction evidence="1">
        <text>a fatty acyl-[ACP] + phosphate = an acyl phosphate + holo-[ACP]</text>
        <dbReference type="Rhea" id="RHEA:42292"/>
        <dbReference type="Rhea" id="RHEA-COMP:9685"/>
        <dbReference type="Rhea" id="RHEA-COMP:14125"/>
        <dbReference type="ChEBI" id="CHEBI:43474"/>
        <dbReference type="ChEBI" id="CHEBI:59918"/>
        <dbReference type="ChEBI" id="CHEBI:64479"/>
        <dbReference type="ChEBI" id="CHEBI:138651"/>
        <dbReference type="EC" id="2.3.1.274"/>
    </reaction>
</comment>
<comment type="pathway">
    <text evidence="1">Lipid metabolism; phospholipid metabolism.</text>
</comment>
<comment type="subunit">
    <text evidence="1">Homodimer. Probably interacts with PlsY.</text>
</comment>
<comment type="subcellular location">
    <subcellularLocation>
        <location evidence="1">Cytoplasm</location>
    </subcellularLocation>
    <text evidence="1">Associated with the membrane possibly through PlsY.</text>
</comment>
<comment type="similarity">
    <text evidence="1">Belongs to the PlsX family.</text>
</comment>
<protein>
    <recommendedName>
        <fullName evidence="1">Phosphate acyltransferase</fullName>
        <ecNumber evidence="1">2.3.1.274</ecNumber>
    </recommendedName>
    <alternativeName>
        <fullName evidence="1">Acyl-ACP phosphotransacylase</fullName>
    </alternativeName>
    <alternativeName>
        <fullName evidence="1">Acyl-[acyl-carrier-protein]--phosphate acyltransferase</fullName>
    </alternativeName>
    <alternativeName>
        <fullName evidence="1">Phosphate-acyl-ACP acyltransferase</fullName>
    </alternativeName>
</protein>
<keyword id="KW-0963">Cytoplasm</keyword>
<keyword id="KW-0444">Lipid biosynthesis</keyword>
<keyword id="KW-0443">Lipid metabolism</keyword>
<keyword id="KW-0594">Phospholipid biosynthesis</keyword>
<keyword id="KW-1208">Phospholipid metabolism</keyword>
<keyword id="KW-0808">Transferase</keyword>
<gene>
    <name evidence="1" type="primary">plsX</name>
    <name type="ordered locus">AYWB_142</name>
</gene>
<proteinExistence type="inferred from homology"/>
<evidence type="ECO:0000255" key="1">
    <source>
        <dbReference type="HAMAP-Rule" id="MF_00019"/>
    </source>
</evidence>
<evidence type="ECO:0000256" key="2">
    <source>
        <dbReference type="SAM" id="MobiDB-lite"/>
    </source>
</evidence>
<feature type="chain" id="PRO_1000201886" description="Phosphate acyltransferase">
    <location>
        <begin position="1"/>
        <end position="362"/>
    </location>
</feature>
<feature type="region of interest" description="Disordered" evidence="2">
    <location>
        <begin position="343"/>
        <end position="362"/>
    </location>
</feature>
<feature type="compositionally biased region" description="Polar residues" evidence="2">
    <location>
        <begin position="344"/>
        <end position="356"/>
    </location>
</feature>
<organism>
    <name type="scientific">Aster yellows witches'-broom phytoplasma (strain AYWB)</name>
    <dbReference type="NCBI Taxonomy" id="322098"/>
    <lineage>
        <taxon>Bacteria</taxon>
        <taxon>Bacillati</taxon>
        <taxon>Mycoplasmatota</taxon>
        <taxon>Mollicutes</taxon>
        <taxon>Acholeplasmatales</taxon>
        <taxon>Acholeplasmataceae</taxon>
        <taxon>Candidatus Phytoplasma</taxon>
        <taxon>16SrI (Aster yellows group)</taxon>
    </lineage>
</organism>